<accession>P61184</accession>
<dbReference type="EMBL" id="BX842650">
    <property type="protein sequence ID" value="CAE79666.1"/>
    <property type="molecule type" value="Genomic_DNA"/>
</dbReference>
<dbReference type="RefSeq" id="WP_011164268.1">
    <property type="nucleotide sequence ID" value="NC_005363.1"/>
</dbReference>
<dbReference type="SMR" id="P61184"/>
<dbReference type="STRING" id="264462.Bd1806"/>
<dbReference type="GeneID" id="93012779"/>
<dbReference type="KEGG" id="bba:Bd1806"/>
<dbReference type="eggNOG" id="COG0326">
    <property type="taxonomic scope" value="Bacteria"/>
</dbReference>
<dbReference type="HOGENOM" id="CLU_006684_3_0_7"/>
<dbReference type="Proteomes" id="UP000008080">
    <property type="component" value="Chromosome"/>
</dbReference>
<dbReference type="GO" id="GO:0005737">
    <property type="term" value="C:cytoplasm"/>
    <property type="evidence" value="ECO:0007669"/>
    <property type="project" value="UniProtKB-SubCell"/>
</dbReference>
<dbReference type="GO" id="GO:0005524">
    <property type="term" value="F:ATP binding"/>
    <property type="evidence" value="ECO:0007669"/>
    <property type="project" value="UniProtKB-UniRule"/>
</dbReference>
<dbReference type="GO" id="GO:0016887">
    <property type="term" value="F:ATP hydrolysis activity"/>
    <property type="evidence" value="ECO:0007669"/>
    <property type="project" value="InterPro"/>
</dbReference>
<dbReference type="GO" id="GO:0140662">
    <property type="term" value="F:ATP-dependent protein folding chaperone"/>
    <property type="evidence" value="ECO:0007669"/>
    <property type="project" value="InterPro"/>
</dbReference>
<dbReference type="GO" id="GO:0051082">
    <property type="term" value="F:unfolded protein binding"/>
    <property type="evidence" value="ECO:0007669"/>
    <property type="project" value="UniProtKB-UniRule"/>
</dbReference>
<dbReference type="CDD" id="cd16927">
    <property type="entry name" value="HATPase_Hsp90-like"/>
    <property type="match status" value="1"/>
</dbReference>
<dbReference type="FunFam" id="3.40.50.11260:FF:000005">
    <property type="entry name" value="Heat shock protein 90"/>
    <property type="match status" value="1"/>
</dbReference>
<dbReference type="FunFam" id="3.30.230.80:FF:000002">
    <property type="entry name" value="Molecular chaperone HtpG"/>
    <property type="match status" value="1"/>
</dbReference>
<dbReference type="FunFam" id="3.30.565.10:FF:000009">
    <property type="entry name" value="Molecular chaperone HtpG"/>
    <property type="match status" value="1"/>
</dbReference>
<dbReference type="Gene3D" id="3.30.230.80">
    <property type="match status" value="1"/>
</dbReference>
<dbReference type="Gene3D" id="3.40.50.11260">
    <property type="match status" value="1"/>
</dbReference>
<dbReference type="Gene3D" id="1.20.120.790">
    <property type="entry name" value="Heat shock protein 90, C-terminal domain"/>
    <property type="match status" value="1"/>
</dbReference>
<dbReference type="Gene3D" id="3.30.565.10">
    <property type="entry name" value="Histidine kinase-like ATPase, C-terminal domain"/>
    <property type="match status" value="1"/>
</dbReference>
<dbReference type="HAMAP" id="MF_00505">
    <property type="entry name" value="HSP90"/>
    <property type="match status" value="1"/>
</dbReference>
<dbReference type="InterPro" id="IPR036890">
    <property type="entry name" value="HATPase_C_sf"/>
</dbReference>
<dbReference type="InterPro" id="IPR019805">
    <property type="entry name" value="Heat_shock_protein_90_CS"/>
</dbReference>
<dbReference type="InterPro" id="IPR037196">
    <property type="entry name" value="HSP90_C"/>
</dbReference>
<dbReference type="InterPro" id="IPR001404">
    <property type="entry name" value="Hsp90_fam"/>
</dbReference>
<dbReference type="InterPro" id="IPR020575">
    <property type="entry name" value="Hsp90_N"/>
</dbReference>
<dbReference type="InterPro" id="IPR020568">
    <property type="entry name" value="Ribosomal_Su5_D2-typ_SF"/>
</dbReference>
<dbReference type="NCBIfam" id="NF003555">
    <property type="entry name" value="PRK05218.1"/>
    <property type="match status" value="1"/>
</dbReference>
<dbReference type="PANTHER" id="PTHR11528">
    <property type="entry name" value="HEAT SHOCK PROTEIN 90 FAMILY MEMBER"/>
    <property type="match status" value="1"/>
</dbReference>
<dbReference type="Pfam" id="PF13589">
    <property type="entry name" value="HATPase_c_3"/>
    <property type="match status" value="1"/>
</dbReference>
<dbReference type="Pfam" id="PF00183">
    <property type="entry name" value="HSP90"/>
    <property type="match status" value="1"/>
</dbReference>
<dbReference type="PIRSF" id="PIRSF002583">
    <property type="entry name" value="Hsp90"/>
    <property type="match status" value="1"/>
</dbReference>
<dbReference type="PRINTS" id="PR00775">
    <property type="entry name" value="HEATSHOCK90"/>
</dbReference>
<dbReference type="SUPFAM" id="SSF55874">
    <property type="entry name" value="ATPase domain of HSP90 chaperone/DNA topoisomerase II/histidine kinase"/>
    <property type="match status" value="1"/>
</dbReference>
<dbReference type="SUPFAM" id="SSF110942">
    <property type="entry name" value="HSP90 C-terminal domain"/>
    <property type="match status" value="1"/>
</dbReference>
<dbReference type="SUPFAM" id="SSF54211">
    <property type="entry name" value="Ribosomal protein S5 domain 2-like"/>
    <property type="match status" value="1"/>
</dbReference>
<dbReference type="PROSITE" id="PS00298">
    <property type="entry name" value="HSP90"/>
    <property type="match status" value="1"/>
</dbReference>
<feature type="chain" id="PRO_0000062969" description="Chaperone protein HtpG">
    <location>
        <begin position="1"/>
        <end position="625"/>
    </location>
</feature>
<feature type="region of interest" description="A; substrate-binding" evidence="1">
    <location>
        <begin position="1"/>
        <end position="330"/>
    </location>
</feature>
<feature type="region of interest" description="B" evidence="1">
    <location>
        <begin position="331"/>
        <end position="545"/>
    </location>
</feature>
<feature type="region of interest" description="C" evidence="1">
    <location>
        <begin position="546"/>
        <end position="625"/>
    </location>
</feature>
<protein>
    <recommendedName>
        <fullName evidence="1">Chaperone protein HtpG</fullName>
    </recommendedName>
    <alternativeName>
        <fullName evidence="1">Heat shock protein HtpG</fullName>
    </alternativeName>
    <alternativeName>
        <fullName evidence="1">High temperature protein G</fullName>
    </alternativeName>
</protein>
<proteinExistence type="inferred from homology"/>
<gene>
    <name evidence="1" type="primary">htpG</name>
    <name type="ordered locus">Bd1806</name>
</gene>
<sequence>MAKQVQNFNAEIKQLLDIVIHSLYSHKEIFLRELLSNASDAIDKLKFNSLTHPSLLPENWQPAIRLEPNSETKTLKIIDNGIGMTQEEVVEFIGTIARSGAKAFMQMNAEMKTKPELIGQFGVGFYSAFMVADRVTLHTQKAGSNDGTVWESMGDGTYSLDSVPRPEGTGTTITLHMKDFKEEDEVQNFTDKWVLKSLVKKYSDFIAHPIKMMGETEEETLNSQKALWLKSPSEVTKEEYKEFYQHLTHDWNEPLRTVHYRAEGTMEFNALLYVPGKKPWNYNMRDMEYGLSLYIKRVFIMADCKDLLPPYLRFVKGLVDSSDLSLNVSRELLQQDRQVTQIRKNVTNKALSTLKDLLTKERSAYEDFWTEFGATLKEGLPSDAANKEKLQDLLLFHSTSSDKMTTMDEYVARMKETQKDIYYITGDSLSQVSNSPYLEKLKEKGFEVLLLVDPVDEWVVDALSEFKGKKLQSIMREGLDLDTAEEKQQKEQEKKQAEVTLKPVLESMKKTLESDVKDVVLSDRLTNTPACLVASSADPSAHMQKLMAQMGKEYAGQQVKRIMEINPNHPVFEKMLKASPEQQTKWAEILYAQALLTEGSNLPDPVKFSQQIAELMVQAADSTKH</sequence>
<organism>
    <name type="scientific">Bdellovibrio bacteriovorus (strain ATCC 15356 / DSM 50701 / NCIMB 9529 / HD100)</name>
    <dbReference type="NCBI Taxonomy" id="264462"/>
    <lineage>
        <taxon>Bacteria</taxon>
        <taxon>Pseudomonadati</taxon>
        <taxon>Bdellovibrionota</taxon>
        <taxon>Bdellovibrionia</taxon>
        <taxon>Bdellovibrionales</taxon>
        <taxon>Pseudobdellovibrionaceae</taxon>
        <taxon>Bdellovibrio</taxon>
    </lineage>
</organism>
<comment type="function">
    <text evidence="1">Molecular chaperone. Has ATPase activity.</text>
</comment>
<comment type="subunit">
    <text evidence="1">Homodimer.</text>
</comment>
<comment type="subcellular location">
    <subcellularLocation>
        <location evidence="1">Cytoplasm</location>
    </subcellularLocation>
</comment>
<comment type="similarity">
    <text evidence="1">Belongs to the heat shock protein 90 family.</text>
</comment>
<evidence type="ECO:0000255" key="1">
    <source>
        <dbReference type="HAMAP-Rule" id="MF_00505"/>
    </source>
</evidence>
<name>HTPG_BDEBA</name>
<keyword id="KW-0067">ATP-binding</keyword>
<keyword id="KW-0143">Chaperone</keyword>
<keyword id="KW-0963">Cytoplasm</keyword>
<keyword id="KW-0547">Nucleotide-binding</keyword>
<keyword id="KW-1185">Reference proteome</keyword>
<keyword id="KW-0346">Stress response</keyword>
<reference key="1">
    <citation type="journal article" date="2004" name="Science">
        <title>A predator unmasked: life cycle of Bdellovibrio bacteriovorus from a genomic perspective.</title>
        <authorList>
            <person name="Rendulic S."/>
            <person name="Jagtap P."/>
            <person name="Rosinus A."/>
            <person name="Eppinger M."/>
            <person name="Baar C."/>
            <person name="Lanz C."/>
            <person name="Keller H."/>
            <person name="Lambert C."/>
            <person name="Evans K.J."/>
            <person name="Goesmann A."/>
            <person name="Meyer F."/>
            <person name="Sockett R.E."/>
            <person name="Schuster S.C."/>
        </authorList>
    </citation>
    <scope>NUCLEOTIDE SEQUENCE [LARGE SCALE GENOMIC DNA]</scope>
    <source>
        <strain>ATCC 15356 / DSM 50701 / NCIMB 9529 / HD100</strain>
    </source>
</reference>